<name>UMPS_HUMAN</name>
<feature type="initiator methionine" description="Removed" evidence="20">
    <location>
        <position position="1"/>
    </location>
</feature>
<feature type="chain" id="PRO_0000139649" description="Uridine 5'-monophosphate synthase">
    <location>
        <begin position="2"/>
        <end position="480"/>
    </location>
</feature>
<feature type="region of interest" description="OPRTase">
    <location>
        <begin position="2"/>
        <end position="214"/>
    </location>
</feature>
<feature type="region of interest" description="Domain linker">
    <location>
        <begin position="215"/>
        <end position="220"/>
    </location>
</feature>
<feature type="region of interest" description="OMPdecase">
    <location>
        <begin position="221"/>
        <end position="480"/>
    </location>
</feature>
<feature type="active site" description="For OMPdecase activity" evidence="1">
    <location>
        <position position="312"/>
    </location>
</feature>
<feature type="active site" description="For OMPdecase activity" evidence="1">
    <location>
        <position position="314"/>
    </location>
</feature>
<feature type="active site" description="For OMPdecase activity" evidence="1">
    <location>
        <position position="317"/>
    </location>
</feature>
<feature type="binding site" evidence="1 16">
    <location>
        <position position="257"/>
    </location>
    <ligand>
        <name>orotidine 5'-phosphate</name>
        <dbReference type="ChEBI" id="CHEBI:57538"/>
    </ligand>
</feature>
<feature type="binding site" evidence="1 11">
    <location>
        <position position="257"/>
    </location>
    <ligand>
        <name>UMP</name>
        <dbReference type="ChEBI" id="CHEBI:57865"/>
    </ligand>
</feature>
<feature type="binding site" evidence="1 11 15">
    <location>
        <position position="259"/>
    </location>
    <ligand>
        <name>UMP</name>
        <dbReference type="ChEBI" id="CHEBI:57865"/>
    </ligand>
</feature>
<feature type="binding site" evidence="1 11 15">
    <location>
        <begin position="281"/>
        <end position="283"/>
    </location>
    <ligand>
        <name>UMP</name>
        <dbReference type="ChEBI" id="CHEBI:57865"/>
    </ligand>
</feature>
<feature type="binding site" evidence="1 16">
    <location>
        <position position="281"/>
    </location>
    <ligand>
        <name>orotidine 5'-phosphate</name>
        <dbReference type="ChEBI" id="CHEBI:57538"/>
    </ligand>
</feature>
<feature type="binding site" evidence="1 16">
    <location>
        <position position="314"/>
    </location>
    <ligand>
        <name>orotidine 5'-phosphate</name>
        <dbReference type="ChEBI" id="CHEBI:57538"/>
    </ligand>
</feature>
<feature type="binding site" evidence="1 16">
    <location>
        <position position="317"/>
    </location>
    <ligand>
        <name>orotidine 5'-phosphate</name>
        <dbReference type="ChEBI" id="CHEBI:57538"/>
    </ligand>
</feature>
<feature type="binding site" evidence="1 11">
    <location>
        <position position="317"/>
    </location>
    <ligand>
        <name>UMP</name>
        <dbReference type="ChEBI" id="CHEBI:57865"/>
    </ligand>
</feature>
<feature type="binding site" evidence="1 16">
    <location>
        <position position="321"/>
    </location>
    <ligand>
        <name>orotidine 5'-phosphate</name>
        <dbReference type="ChEBI" id="CHEBI:57538"/>
    </ligand>
</feature>
<feature type="binding site" evidence="1 11">
    <location>
        <position position="321"/>
    </location>
    <ligand>
        <name>UMP</name>
        <dbReference type="ChEBI" id="CHEBI:57865"/>
    </ligand>
</feature>
<feature type="binding site" evidence="1 16">
    <location>
        <position position="372"/>
    </location>
    <ligand>
        <name>orotidine 5'-phosphate</name>
        <dbReference type="ChEBI" id="CHEBI:57538"/>
    </ligand>
</feature>
<feature type="binding site" evidence="1 11 15">
    <location>
        <position position="372"/>
    </location>
    <ligand>
        <name>UMP</name>
        <dbReference type="ChEBI" id="CHEBI:57865"/>
    </ligand>
</feature>
<feature type="binding site" evidence="1 16">
    <location>
        <begin position="430"/>
        <end position="432"/>
    </location>
    <ligand>
        <name>orotidine 5'-phosphate</name>
        <dbReference type="ChEBI" id="CHEBI:57538"/>
    </ligand>
</feature>
<feature type="binding site" evidence="1 11 15">
    <location>
        <begin position="430"/>
        <end position="432"/>
    </location>
    <ligand>
        <name>UMP</name>
        <dbReference type="ChEBI" id="CHEBI:57865"/>
    </ligand>
</feature>
<feature type="binding site" evidence="1 16">
    <location>
        <begin position="450"/>
        <end position="451"/>
    </location>
    <ligand>
        <name>orotidine 5'-phosphate</name>
        <dbReference type="ChEBI" id="CHEBI:57538"/>
    </ligand>
</feature>
<feature type="binding site" evidence="1 11 15">
    <location>
        <begin position="450"/>
        <end position="451"/>
    </location>
    <ligand>
        <name>UMP</name>
        <dbReference type="ChEBI" id="CHEBI:57865"/>
    </ligand>
</feature>
<feature type="modified residue" description="N-acetylalanine" evidence="20">
    <location>
        <position position="2"/>
    </location>
</feature>
<feature type="modified residue" description="Phosphotyrosine" evidence="22">
    <location>
        <position position="37"/>
    </location>
</feature>
<feature type="modified residue" description="Phosphoserine" evidence="19 21 22">
    <location>
        <position position="214"/>
    </location>
</feature>
<feature type="splice variant" id="VSP_009273" description="In isoform 2 and isoform 4." evidence="4 7">
    <location>
        <begin position="1"/>
        <end position="178"/>
    </location>
</feature>
<feature type="splice variant" id="VSP_047611" description="In isoform 3." evidence="7">
    <location>
        <begin position="1"/>
        <end position="92"/>
    </location>
</feature>
<feature type="splice variant" id="VSP_047612" description="In isoform 4." evidence="7">
    <location>
        <begin position="328"/>
        <end position="424"/>
    </location>
</feature>
<feature type="sequence variant" id="VAR_020614" description="In dbSNP:rs17843776." evidence="3">
    <original>S</original>
    <variation>G</variation>
    <location>
        <position position="30"/>
    </location>
</feature>
<feature type="sequence variant" id="VAR_006807" description="In ORAC1; reduced OPRT activity; no effect on ODC activity; reduced OPRT and ODC activities when associated with R-429; dbSNP:rs121917890." evidence="2">
    <original>R</original>
    <variation>G</variation>
    <location>
        <position position="96"/>
    </location>
</feature>
<feature type="sequence variant" id="VAR_006808" description="In ORAC1; reduced OPRT activity; reduced ODC activity; dbSNP:rs121917892." evidence="2">
    <original>V</original>
    <variation>G</variation>
    <location>
        <position position="109"/>
    </location>
</feature>
<feature type="sequence variant" id="VAR_006809" description="In dbSNP:rs1801019." evidence="2 3">
    <original>G</original>
    <variation>A</variation>
    <location>
        <position position="213"/>
    </location>
</feature>
<feature type="sequence variant" id="VAR_006810" description="In ORAC1; increased OPRT activity; reduced ODC activity; reduced OPRT and ODC activities when associated with G-96; dbSNP:rs121917891." evidence="2">
    <original>G</original>
    <variation>R</variation>
    <location>
        <position position="429"/>
    </location>
</feature>
<feature type="sequence variant" id="VAR_020615" description="In dbSNP:rs3772809." evidence="3">
    <original>I</original>
    <variation>V</variation>
    <location>
        <position position="446"/>
    </location>
</feature>
<feature type="mutagenesis site" description="Loss of OMPdecase activity." evidence="1">
    <original>D</original>
    <variation>N</variation>
    <location>
        <position position="312"/>
    </location>
</feature>
<feature type="sequence conflict" description="In Ref. 11; AAA61256." evidence="8" ref="11">
    <original>T</original>
    <variation>G</variation>
    <location>
        <position position="13"/>
    </location>
</feature>
<feature type="sequence conflict" description="In Ref. 11; AAA61256." evidence="8" ref="11">
    <original>L</original>
    <variation>Q</variation>
    <location>
        <position position="377"/>
    </location>
</feature>
<feature type="helix" evidence="23">
    <location>
        <begin position="8"/>
        <end position="16"/>
    </location>
</feature>
<feature type="turn" evidence="23">
    <location>
        <begin position="17"/>
        <end position="19"/>
    </location>
</feature>
<feature type="strand" evidence="23">
    <location>
        <begin position="21"/>
        <end position="27"/>
    </location>
</feature>
<feature type="strand" evidence="23">
    <location>
        <begin position="33"/>
        <end position="38"/>
    </location>
</feature>
<feature type="helix" evidence="23">
    <location>
        <begin position="40"/>
        <end position="45"/>
    </location>
</feature>
<feature type="helix" evidence="23">
    <location>
        <begin position="47"/>
        <end position="63"/>
    </location>
</feature>
<feature type="strand" evidence="23">
    <location>
        <begin position="69"/>
        <end position="73"/>
    </location>
</feature>
<feature type="turn" evidence="23">
    <location>
        <begin position="75"/>
        <end position="78"/>
    </location>
</feature>
<feature type="helix" evidence="23">
    <location>
        <begin position="79"/>
        <end position="89"/>
    </location>
</feature>
<feature type="strand" evidence="23">
    <location>
        <begin position="93"/>
        <end position="96"/>
    </location>
</feature>
<feature type="turn" evidence="23">
    <location>
        <begin position="99"/>
        <end position="102"/>
    </location>
</feature>
<feature type="strand" evidence="23">
    <location>
        <begin position="103"/>
        <end position="105"/>
    </location>
</feature>
<feature type="strand" evidence="23">
    <location>
        <begin position="108"/>
        <end position="111"/>
    </location>
</feature>
<feature type="strand" evidence="23">
    <location>
        <begin position="118"/>
        <end position="129"/>
    </location>
</feature>
<feature type="helix" evidence="23">
    <location>
        <begin position="130"/>
        <end position="141"/>
    </location>
</feature>
<feature type="strand" evidence="23">
    <location>
        <begin position="148"/>
        <end position="154"/>
    </location>
</feature>
<feature type="helix" evidence="23">
    <location>
        <begin position="159"/>
        <end position="164"/>
    </location>
</feature>
<feature type="turn" evidence="23">
    <location>
        <begin position="165"/>
        <end position="167"/>
    </location>
</feature>
<feature type="strand" evidence="23">
    <location>
        <begin position="169"/>
        <end position="175"/>
    </location>
</feature>
<feature type="helix" evidence="23">
    <location>
        <begin position="176"/>
        <end position="185"/>
    </location>
</feature>
<feature type="helix" evidence="23">
    <location>
        <begin position="191"/>
        <end position="202"/>
    </location>
</feature>
<feature type="helix" evidence="26">
    <location>
        <begin position="227"/>
        <end position="230"/>
    </location>
</feature>
<feature type="helix" evidence="26">
    <location>
        <begin position="238"/>
        <end position="250"/>
    </location>
</feature>
<feature type="strand" evidence="26">
    <location>
        <begin position="254"/>
        <end position="257"/>
    </location>
</feature>
<feature type="helix" evidence="26">
    <location>
        <begin position="263"/>
        <end position="273"/>
    </location>
</feature>
<feature type="helix" evidence="26">
    <location>
        <begin position="274"/>
        <end position="276"/>
    </location>
</feature>
<feature type="strand" evidence="26">
    <location>
        <begin position="278"/>
        <end position="282"/>
    </location>
</feature>
<feature type="helix" evidence="26">
    <location>
        <begin position="284"/>
        <end position="286"/>
    </location>
</feature>
<feature type="helix" evidence="26">
    <location>
        <begin position="292"/>
        <end position="305"/>
    </location>
</feature>
<feature type="strand" evidence="26">
    <location>
        <begin position="308"/>
        <end position="315"/>
    </location>
</feature>
<feature type="helix" evidence="26">
    <location>
        <begin position="319"/>
        <end position="327"/>
    </location>
</feature>
<feature type="turn" evidence="26">
    <location>
        <begin position="329"/>
        <end position="331"/>
    </location>
</feature>
<feature type="helix" evidence="26">
    <location>
        <begin position="333"/>
        <end position="335"/>
    </location>
</feature>
<feature type="strand" evidence="26">
    <location>
        <begin position="338"/>
        <end position="344"/>
    </location>
</feature>
<feature type="helix" evidence="26">
    <location>
        <begin position="349"/>
        <end position="358"/>
    </location>
</feature>
<feature type="turn" evidence="26">
    <location>
        <begin position="359"/>
        <end position="362"/>
    </location>
</feature>
<feature type="strand" evidence="26">
    <location>
        <begin position="364"/>
        <end position="368"/>
    </location>
</feature>
<feature type="helix" evidence="26">
    <location>
        <begin position="381"/>
        <end position="392"/>
    </location>
</feature>
<feature type="turn" evidence="26">
    <location>
        <begin position="394"/>
        <end position="396"/>
    </location>
</feature>
<feature type="strand" evidence="26">
    <location>
        <begin position="397"/>
        <end position="401"/>
    </location>
</feature>
<feature type="strand" evidence="26">
    <location>
        <begin position="412"/>
        <end position="416"/>
    </location>
</feature>
<feature type="strand" evidence="26">
    <location>
        <begin position="421"/>
        <end position="425"/>
    </location>
</feature>
<feature type="turn" evidence="24">
    <location>
        <begin position="427"/>
        <end position="429"/>
    </location>
</feature>
<feature type="strand" evidence="26">
    <location>
        <begin position="431"/>
        <end position="433"/>
    </location>
</feature>
<feature type="helix" evidence="26">
    <location>
        <begin position="435"/>
        <end position="440"/>
    </location>
</feature>
<feature type="strand" evidence="26">
    <location>
        <begin position="445"/>
        <end position="450"/>
    </location>
</feature>
<feature type="helix" evidence="26">
    <location>
        <begin position="451"/>
        <end position="454"/>
    </location>
</feature>
<feature type="strand" evidence="25">
    <location>
        <begin position="456"/>
        <end position="458"/>
    </location>
</feature>
<feature type="helix" evidence="26">
    <location>
        <begin position="459"/>
        <end position="478"/>
    </location>
</feature>
<comment type="function">
    <text evidence="1 2">Bifunctional enzyme catalyzing the last two steps of de novo pyrimidine biosynthesis, orotate phosphoribosyltransferase (OPRT), which converts orotate to orotidine-5'-monophosphate (OMP), and orotidine-5'-monophosphate decarboxylase (ODC), the terminal enzymatic reaction that decarboxylates OMP to uridine monophosphate (UMP).</text>
</comment>
<comment type="catalytic activity">
    <reaction evidence="2">
        <text>orotidine 5'-phosphate + diphosphate = orotate + 5-phospho-alpha-D-ribose 1-diphosphate</text>
        <dbReference type="Rhea" id="RHEA:10380"/>
        <dbReference type="ChEBI" id="CHEBI:30839"/>
        <dbReference type="ChEBI" id="CHEBI:33019"/>
        <dbReference type="ChEBI" id="CHEBI:57538"/>
        <dbReference type="ChEBI" id="CHEBI:58017"/>
        <dbReference type="EC" id="2.4.2.10"/>
    </reaction>
    <physiologicalReaction direction="right-to-left" evidence="2">
        <dbReference type="Rhea" id="RHEA:10382"/>
    </physiologicalReaction>
</comment>
<comment type="catalytic activity">
    <reaction evidence="1 2">
        <text>orotidine 5'-phosphate + H(+) = UMP + CO2</text>
        <dbReference type="Rhea" id="RHEA:11596"/>
        <dbReference type="ChEBI" id="CHEBI:15378"/>
        <dbReference type="ChEBI" id="CHEBI:16526"/>
        <dbReference type="ChEBI" id="CHEBI:57538"/>
        <dbReference type="ChEBI" id="CHEBI:57865"/>
        <dbReference type="EC" id="4.1.1.23"/>
    </reaction>
    <physiologicalReaction direction="left-to-right" evidence="1 2">
        <dbReference type="Rhea" id="RHEA:11597"/>
    </physiologicalReaction>
</comment>
<comment type="biophysicochemical properties">
    <kinetics>
        <KM evidence="1">16.6 uM for orotidine 5'-phosphate</KM>
        <text evidence="1">kcat is 0.75 sec(-1) with orotidine 5'-phosphate as substrate.</text>
    </kinetics>
</comment>
<comment type="pathway">
    <text evidence="2">Pyrimidine metabolism; UMP biosynthesis via de novo pathway; UMP from orotate: step 1/2.</text>
</comment>
<comment type="pathway">
    <text evidence="2">Pyrimidine metabolism; UMP biosynthesis via de novo pathway; UMP from orotate: step 2/2.</text>
</comment>
<comment type="subunit">
    <text evidence="1">Homodimer; dimerization is required for enzymatic activity.</text>
</comment>
<comment type="interaction">
    <interactant intactId="EBI-723452">
        <id>P11172</id>
    </interactant>
    <interactant intactId="EBI-5773557">
        <id>P54764</id>
        <label>EPHA4</label>
    </interactant>
    <organismsDiffer>false</organismsDiffer>
    <experiments>2</experiments>
</comment>
<comment type="interaction">
    <interactant intactId="EBI-15679357">
        <id>P11172-1</id>
    </interactant>
    <interactant intactId="EBI-15679357">
        <id>P11172-1</id>
        <label>UMPS</label>
    </interactant>
    <organismsDiffer>false</organismsDiffer>
    <experiments>2</experiments>
</comment>
<comment type="alternative products">
    <event type="alternative splicing"/>
    <isoform>
        <id>P11172-1</id>
        <name>1</name>
        <sequence type="displayed"/>
    </isoform>
    <isoform>
        <id>P11172-2</id>
        <name>2</name>
        <sequence type="described" ref="VSP_009273"/>
    </isoform>
    <isoform>
        <id>P11172-3</id>
        <name>3</name>
        <sequence type="described" ref="VSP_047611"/>
    </isoform>
    <isoform>
        <id>P11172-4</id>
        <name>4</name>
        <sequence type="described" ref="VSP_009273 VSP_047612"/>
    </isoform>
</comment>
<comment type="disease" evidence="2">
    <disease id="DI-01730">
        <name>Orotic aciduria 1</name>
        <acronym>ORAC1</acronym>
        <description>A disorder of pyrimidine metabolism resulting in megaloblastic anemia and orotic acid crystalluria that is frequently associated with some degree of physical and intellectual disability. A minority of cases have additional features, particularly congenital malformations and immune deficiencies.</description>
        <dbReference type="MIM" id="258900"/>
    </disease>
    <text>The disease is caused by variants affecting the gene represented in this entry.</text>
</comment>
<comment type="similarity">
    <text evidence="8">In the N-terminal section; belongs to the purine/pyrimidine phosphoribosyltransferase family.</text>
</comment>
<comment type="similarity">
    <text evidence="8">In the C-terminal section; belongs to the OMP decarboxylase family.</text>
</comment>
<comment type="sequence caution" evidence="8">
    <conflict type="erroneous termination">
        <sequence resource="EMBL-CDS" id="CAB45710"/>
    </conflict>
    <text>Truncated C-terminus.</text>
</comment>
<protein>
    <recommendedName>
        <fullName evidence="8">Uridine 5'-monophosphate synthase</fullName>
        <shortName>UMP synthase</shortName>
    </recommendedName>
    <domain>
        <recommendedName>
            <fullName evidence="8">Orotate phosphoribosyltransferase</fullName>
            <shortName evidence="6">OPRT</shortName>
            <shortName>OPRTase</shortName>
            <ecNumber evidence="2">2.4.2.10</ecNumber>
        </recommendedName>
    </domain>
    <domain>
        <recommendedName>
            <fullName evidence="8">Orotidine 5'-phosphate decarboxylase</fullName>
            <shortName evidence="6">ODC</shortName>
            <shortName evidence="5">OMPD</shortName>
            <ecNumber evidence="1 2">4.1.1.23</ecNumber>
        </recommendedName>
        <alternativeName>
            <fullName>OMPdecase</fullName>
        </alternativeName>
    </domain>
</protein>
<accession>P11172</accession>
<accession>B5LY68</accession>
<accession>B5LY72</accession>
<accession>O00758</accession>
<accession>O00759</accession>
<accession>O00760</accession>
<accession>Q16862</accession>
<accession>Q9H3Q2</accession>
<accession>Q9UG49</accession>
<gene>
    <name evidence="9" type="primary">UMPS</name>
    <name type="ORF">OK/SW-cl.21</name>
</gene>
<dbReference type="EC" id="2.4.2.10" evidence="2"/>
<dbReference type="EC" id="4.1.1.23" evidence="1 2"/>
<dbReference type="EMBL" id="J03626">
    <property type="protein sequence ID" value="AAA61255.1"/>
    <property type="molecule type" value="mRNA"/>
</dbReference>
<dbReference type="EMBL" id="D86227">
    <property type="protein sequence ID" value="BAA19920.1"/>
    <property type="molecule type" value="mRNA"/>
</dbReference>
<dbReference type="EMBL" id="D86228">
    <property type="protein sequence ID" value="BAA19921.1"/>
    <property type="molecule type" value="mRNA"/>
</dbReference>
<dbReference type="EMBL" id="D86230">
    <property type="protein sequence ID" value="BAA19923.1"/>
    <property type="molecule type" value="mRNA"/>
</dbReference>
<dbReference type="EMBL" id="AB041359">
    <property type="protein sequence ID" value="BAB20663.1"/>
    <property type="molecule type" value="Genomic_DNA"/>
</dbReference>
<dbReference type="EMBL" id="EU921891">
    <property type="protein sequence ID" value="ACH48229.1"/>
    <property type="molecule type" value="mRNA"/>
</dbReference>
<dbReference type="EMBL" id="EU921895">
    <property type="protein sequence ID" value="ACH48233.1"/>
    <property type="molecule type" value="mRNA"/>
</dbReference>
<dbReference type="EMBL" id="AB062285">
    <property type="protein sequence ID" value="BAB93468.1"/>
    <property type="molecule type" value="mRNA"/>
</dbReference>
<dbReference type="EMBL" id="CR456787">
    <property type="protein sequence ID" value="CAG33068.1"/>
    <property type="molecule type" value="mRNA"/>
</dbReference>
<dbReference type="EMBL" id="AL080099">
    <property type="protein sequence ID" value="CAB45710.3"/>
    <property type="status" value="ALT_SEQ"/>
    <property type="molecule type" value="mRNA"/>
</dbReference>
<dbReference type="EMBL" id="AY691629">
    <property type="protein sequence ID" value="AAT85801.1"/>
    <property type="molecule type" value="Genomic_DNA"/>
</dbReference>
<dbReference type="EMBL" id="AC022336">
    <property type="status" value="NOT_ANNOTATED_CDS"/>
    <property type="molecule type" value="Genomic_DNA"/>
</dbReference>
<dbReference type="EMBL" id="BC000364">
    <property type="protein sequence ID" value="AAH00364.1"/>
    <property type="molecule type" value="mRNA"/>
</dbReference>
<dbReference type="EMBL" id="BC007511">
    <property type="protein sequence ID" value="AAH07511.1"/>
    <property type="molecule type" value="mRNA"/>
</dbReference>
<dbReference type="EMBL" id="M36661">
    <property type="protein sequence ID" value="AAA61256.1"/>
    <property type="molecule type" value="mRNA"/>
</dbReference>
<dbReference type="CCDS" id="CCDS3029.1">
    <molecule id="P11172-1"/>
</dbReference>
<dbReference type="PIR" id="A30148">
    <property type="entry name" value="A30148"/>
</dbReference>
<dbReference type="RefSeq" id="NP_000364.1">
    <molecule id="P11172-1"/>
    <property type="nucleotide sequence ID" value="NM_000373.4"/>
</dbReference>
<dbReference type="PDB" id="2EAW">
    <property type="method" value="X-ray"/>
    <property type="resolution" value="2.88 A"/>
    <property type="chains" value="A/B=190-480"/>
</dbReference>
<dbReference type="PDB" id="2JGY">
    <property type="method" value="X-ray"/>
    <property type="resolution" value="1.95 A"/>
    <property type="chains" value="A/B=224-479"/>
</dbReference>
<dbReference type="PDB" id="2P1F">
    <property type="method" value="X-ray"/>
    <property type="resolution" value="1.76 A"/>
    <property type="chains" value="A=190-480"/>
</dbReference>
<dbReference type="PDB" id="2QCC">
    <property type="method" value="X-ray"/>
    <property type="resolution" value="1.85 A"/>
    <property type="chains" value="A/B=224-480"/>
</dbReference>
<dbReference type="PDB" id="2QCD">
    <property type="method" value="X-ray"/>
    <property type="resolution" value="2.03 A"/>
    <property type="chains" value="A/B=224-480"/>
</dbReference>
<dbReference type="PDB" id="2QCE">
    <property type="method" value="X-ray"/>
    <property type="resolution" value="1.43 A"/>
    <property type="chains" value="A=224-480"/>
</dbReference>
<dbReference type="PDB" id="2QCF">
    <property type="method" value="X-ray"/>
    <property type="resolution" value="1.22 A"/>
    <property type="chains" value="A=224-480"/>
</dbReference>
<dbReference type="PDB" id="2QCG">
    <property type="method" value="X-ray"/>
    <property type="resolution" value="1.75 A"/>
    <property type="chains" value="A/B=224-480"/>
</dbReference>
<dbReference type="PDB" id="2QCH">
    <property type="method" value="X-ray"/>
    <property type="resolution" value="1.95 A"/>
    <property type="chains" value="A/B=224-480"/>
</dbReference>
<dbReference type="PDB" id="2QCL">
    <property type="method" value="X-ray"/>
    <property type="resolution" value="1.85 A"/>
    <property type="chains" value="A/B=224-480"/>
</dbReference>
<dbReference type="PDB" id="2QCM">
    <property type="method" value="X-ray"/>
    <property type="resolution" value="1.67 A"/>
    <property type="chains" value="A=224-480"/>
</dbReference>
<dbReference type="PDB" id="2QCN">
    <property type="method" value="X-ray"/>
    <property type="resolution" value="1.85 A"/>
    <property type="chains" value="A/B=224-480"/>
</dbReference>
<dbReference type="PDB" id="2V30">
    <property type="method" value="X-ray"/>
    <property type="resolution" value="2.00 A"/>
    <property type="chains" value="A/B=224-479"/>
</dbReference>
<dbReference type="PDB" id="2WNS">
    <property type="method" value="X-ray"/>
    <property type="resolution" value="1.90 A"/>
    <property type="chains" value="A/B=7-203"/>
</dbReference>
<dbReference type="PDB" id="3BGG">
    <property type="method" value="X-ray"/>
    <property type="resolution" value="1.93 A"/>
    <property type="chains" value="A=190-480"/>
</dbReference>
<dbReference type="PDB" id="3BGJ">
    <property type="method" value="X-ray"/>
    <property type="resolution" value="2.00 A"/>
    <property type="chains" value="A/B=190-480"/>
</dbReference>
<dbReference type="PDB" id="3BK0">
    <property type="method" value="X-ray"/>
    <property type="resolution" value="1.60 A"/>
    <property type="chains" value="A/B=223-480"/>
</dbReference>
<dbReference type="PDB" id="3BVJ">
    <property type="method" value="X-ray"/>
    <property type="resolution" value="1.80 A"/>
    <property type="chains" value="A/B=190-480"/>
</dbReference>
<dbReference type="PDB" id="3DBP">
    <property type="method" value="X-ray"/>
    <property type="resolution" value="1.50 A"/>
    <property type="chains" value="A/B=223-480"/>
</dbReference>
<dbReference type="PDB" id="3EWU">
    <property type="method" value="X-ray"/>
    <property type="resolution" value="1.60 A"/>
    <property type="chains" value="A/B=224-480"/>
</dbReference>
<dbReference type="PDB" id="3EWW">
    <property type="method" value="X-ray"/>
    <property type="resolution" value="1.10 A"/>
    <property type="chains" value="A/B=224-480"/>
</dbReference>
<dbReference type="PDB" id="3EWX">
    <property type="method" value="X-ray"/>
    <property type="resolution" value="1.40 A"/>
    <property type="chains" value="A=224-480"/>
</dbReference>
<dbReference type="PDB" id="3EWY">
    <property type="method" value="X-ray"/>
    <property type="resolution" value="1.10 A"/>
    <property type="chains" value="A=224-480"/>
</dbReference>
<dbReference type="PDB" id="3EWZ">
    <property type="method" value="X-ray"/>
    <property type="resolution" value="1.40 A"/>
    <property type="chains" value="A/B/C/D=224-480"/>
</dbReference>
<dbReference type="PDB" id="3EX1">
    <property type="method" value="X-ray"/>
    <property type="resolution" value="1.40 A"/>
    <property type="chains" value="A/B=224-480"/>
</dbReference>
<dbReference type="PDB" id="3EX2">
    <property type="method" value="X-ray"/>
    <property type="resolution" value="1.55 A"/>
    <property type="chains" value="A/B=224-480"/>
</dbReference>
<dbReference type="PDB" id="3EX3">
    <property type="method" value="X-ray"/>
    <property type="resolution" value="1.45 A"/>
    <property type="chains" value="A/B=224-480"/>
</dbReference>
<dbReference type="PDB" id="3EX4">
    <property type="method" value="X-ray"/>
    <property type="resolution" value="1.24 A"/>
    <property type="chains" value="A=224-480"/>
</dbReference>
<dbReference type="PDB" id="3EX6">
    <property type="method" value="X-ray"/>
    <property type="resolution" value="1.30 A"/>
    <property type="chains" value="A/B=224-480"/>
</dbReference>
<dbReference type="PDB" id="3G3D">
    <property type="method" value="X-ray"/>
    <property type="resolution" value="1.70 A"/>
    <property type="chains" value="A/B=190-480"/>
</dbReference>
<dbReference type="PDB" id="3G3M">
    <property type="method" value="X-ray"/>
    <property type="resolution" value="1.40 A"/>
    <property type="chains" value="A=223-480"/>
</dbReference>
<dbReference type="PDB" id="3L0K">
    <property type="method" value="X-ray"/>
    <property type="resolution" value="1.34 A"/>
    <property type="chains" value="A/B=224-480"/>
</dbReference>
<dbReference type="PDB" id="3L0N">
    <property type="method" value="X-ray"/>
    <property type="resolution" value="1.74 A"/>
    <property type="chains" value="A/B=224-480"/>
</dbReference>
<dbReference type="PDB" id="3MI2">
    <property type="method" value="X-ray"/>
    <property type="resolution" value="1.20 A"/>
    <property type="chains" value="A/B=223-480"/>
</dbReference>
<dbReference type="PDB" id="3MO7">
    <property type="method" value="X-ray"/>
    <property type="resolution" value="1.35 A"/>
    <property type="chains" value="A=223-480"/>
</dbReference>
<dbReference type="PDB" id="3MW7">
    <property type="method" value="X-ray"/>
    <property type="resolution" value="2.32 A"/>
    <property type="chains" value="A/B=190-480"/>
</dbReference>
<dbReference type="PDB" id="4HIB">
    <property type="method" value="X-ray"/>
    <property type="resolution" value="1.80 A"/>
    <property type="chains" value="A/B=190-480"/>
</dbReference>
<dbReference type="PDB" id="4HKP">
    <property type="method" value="X-ray"/>
    <property type="resolution" value="1.75 A"/>
    <property type="chains" value="A/B=190-480"/>
</dbReference>
<dbReference type="PDB" id="6YVK">
    <property type="method" value="X-ray"/>
    <property type="resolution" value="1.25 A"/>
    <property type="chains" value="A=224-480"/>
</dbReference>
<dbReference type="PDB" id="6YVL">
    <property type="method" value="X-ray"/>
    <property type="resolution" value="1.25 A"/>
    <property type="chains" value="A=224-480"/>
</dbReference>
<dbReference type="PDB" id="6YVM">
    <property type="method" value="X-ray"/>
    <property type="resolution" value="1.25 A"/>
    <property type="chains" value="A=224-480"/>
</dbReference>
<dbReference type="PDB" id="6YVN">
    <property type="method" value="X-ray"/>
    <property type="resolution" value="1.25 A"/>
    <property type="chains" value="A=224-480"/>
</dbReference>
<dbReference type="PDB" id="6YVO">
    <property type="method" value="X-ray"/>
    <property type="resolution" value="1.25 A"/>
    <property type="chains" value="A=224-480"/>
</dbReference>
<dbReference type="PDB" id="6YWT">
    <property type="method" value="X-ray"/>
    <property type="resolution" value="1.05 A"/>
    <property type="chains" value="A=224-480"/>
</dbReference>
<dbReference type="PDB" id="6YWU">
    <property type="method" value="X-ray"/>
    <property type="resolution" value="1.10 A"/>
    <property type="chains" value="A=224-480"/>
</dbReference>
<dbReference type="PDB" id="6ZWY">
    <property type="method" value="X-ray"/>
    <property type="resolution" value="1.00 A"/>
    <property type="chains" value="A=224-480"/>
</dbReference>
<dbReference type="PDB" id="6ZWZ">
    <property type="method" value="X-ray"/>
    <property type="resolution" value="1.20 A"/>
    <property type="chains" value="A=224-480"/>
</dbReference>
<dbReference type="PDB" id="6ZX0">
    <property type="method" value="X-ray"/>
    <property type="resolution" value="1.25 A"/>
    <property type="chains" value="A=224-480"/>
</dbReference>
<dbReference type="PDB" id="6ZX1">
    <property type="method" value="X-ray"/>
    <property type="resolution" value="1.00 A"/>
    <property type="chains" value="A=224-480"/>
</dbReference>
<dbReference type="PDB" id="6ZX2">
    <property type="method" value="X-ray"/>
    <property type="resolution" value="1.20 A"/>
    <property type="chains" value="A=224-480"/>
</dbReference>
<dbReference type="PDB" id="6ZX3">
    <property type="method" value="X-ray"/>
    <property type="resolution" value="1.15 A"/>
    <property type="chains" value="A=224-480"/>
</dbReference>
<dbReference type="PDB" id="7AM9">
    <property type="method" value="X-ray"/>
    <property type="resolution" value="0.99 A"/>
    <property type="chains" value="A=224-480"/>
</dbReference>
<dbReference type="PDB" id="7ASQ">
    <property type="method" value="X-ray"/>
    <property type="resolution" value="0.95 A"/>
    <property type="chains" value="A=224-480"/>
</dbReference>
<dbReference type="PDB" id="7OQF">
    <property type="method" value="X-ray"/>
    <property type="resolution" value="1.05 A"/>
    <property type="chains" value="A/B=224-480"/>
</dbReference>
<dbReference type="PDB" id="7OQI">
    <property type="method" value="X-ray"/>
    <property type="resolution" value="1.15 A"/>
    <property type="chains" value="A/B=224-480"/>
</dbReference>
<dbReference type="PDB" id="7OQK">
    <property type="method" value="X-ray"/>
    <property type="resolution" value="1.10 A"/>
    <property type="chains" value="A/B=224-480"/>
</dbReference>
<dbReference type="PDB" id="7OQM">
    <property type="method" value="X-ray"/>
    <property type="resolution" value="1.05 A"/>
    <property type="chains" value="A/B=224-480"/>
</dbReference>
<dbReference type="PDB" id="7OQN">
    <property type="method" value="X-ray"/>
    <property type="resolution" value="1.10 A"/>
    <property type="chains" value="A/B=224-480"/>
</dbReference>
<dbReference type="PDB" id="7OTU">
    <property type="method" value="X-ray"/>
    <property type="resolution" value="0.95 A"/>
    <property type="chains" value="A=224-480"/>
</dbReference>
<dbReference type="PDB" id="7OUZ">
    <property type="method" value="X-ray"/>
    <property type="resolution" value="0.90 A"/>
    <property type="chains" value="A=224-479"/>
</dbReference>
<dbReference type="PDB" id="7OV0">
    <property type="method" value="X-ray"/>
    <property type="resolution" value="0.95 A"/>
    <property type="chains" value="A=224-480"/>
</dbReference>
<dbReference type="PDB" id="7Q1H">
    <property type="method" value="X-ray"/>
    <property type="resolution" value="1.31 A"/>
    <property type="chains" value="A=224-480"/>
</dbReference>
<dbReference type="PDBsum" id="2EAW"/>
<dbReference type="PDBsum" id="2JGY"/>
<dbReference type="PDBsum" id="2P1F"/>
<dbReference type="PDBsum" id="2QCC"/>
<dbReference type="PDBsum" id="2QCD"/>
<dbReference type="PDBsum" id="2QCE"/>
<dbReference type="PDBsum" id="2QCF"/>
<dbReference type="PDBsum" id="2QCG"/>
<dbReference type="PDBsum" id="2QCH"/>
<dbReference type="PDBsum" id="2QCL"/>
<dbReference type="PDBsum" id="2QCM"/>
<dbReference type="PDBsum" id="2QCN"/>
<dbReference type="PDBsum" id="2V30"/>
<dbReference type="PDBsum" id="2WNS"/>
<dbReference type="PDBsum" id="3BGG"/>
<dbReference type="PDBsum" id="3BGJ"/>
<dbReference type="PDBsum" id="3BK0"/>
<dbReference type="PDBsum" id="3BVJ"/>
<dbReference type="PDBsum" id="3DBP"/>
<dbReference type="PDBsum" id="3EWU"/>
<dbReference type="PDBsum" id="3EWW"/>
<dbReference type="PDBsum" id="3EWX"/>
<dbReference type="PDBsum" id="3EWY"/>
<dbReference type="PDBsum" id="3EWZ"/>
<dbReference type="PDBsum" id="3EX1"/>
<dbReference type="PDBsum" id="3EX2"/>
<dbReference type="PDBsum" id="3EX3"/>
<dbReference type="PDBsum" id="3EX4"/>
<dbReference type="PDBsum" id="3EX6"/>
<dbReference type="PDBsum" id="3G3D"/>
<dbReference type="PDBsum" id="3G3M"/>
<dbReference type="PDBsum" id="3L0K"/>
<dbReference type="PDBsum" id="3L0N"/>
<dbReference type="PDBsum" id="3MI2"/>
<dbReference type="PDBsum" id="3MO7"/>
<dbReference type="PDBsum" id="3MW7"/>
<dbReference type="PDBsum" id="4HIB"/>
<dbReference type="PDBsum" id="4HKP"/>
<dbReference type="PDBsum" id="6YVK"/>
<dbReference type="PDBsum" id="6YVL"/>
<dbReference type="PDBsum" id="6YVM"/>
<dbReference type="PDBsum" id="6YVN"/>
<dbReference type="PDBsum" id="6YVO"/>
<dbReference type="PDBsum" id="6YWT"/>
<dbReference type="PDBsum" id="6YWU"/>
<dbReference type="PDBsum" id="6ZWY"/>
<dbReference type="PDBsum" id="6ZWZ"/>
<dbReference type="PDBsum" id="6ZX0"/>
<dbReference type="PDBsum" id="6ZX1"/>
<dbReference type="PDBsum" id="6ZX2"/>
<dbReference type="PDBsum" id="6ZX3"/>
<dbReference type="PDBsum" id="7AM9"/>
<dbReference type="PDBsum" id="7ASQ"/>
<dbReference type="PDBsum" id="7OQF"/>
<dbReference type="PDBsum" id="7OQI"/>
<dbReference type="PDBsum" id="7OQK"/>
<dbReference type="PDBsum" id="7OQM"/>
<dbReference type="PDBsum" id="7OQN"/>
<dbReference type="PDBsum" id="7OTU"/>
<dbReference type="PDBsum" id="7OUZ"/>
<dbReference type="PDBsum" id="7OV0"/>
<dbReference type="PDBsum" id="7Q1H"/>
<dbReference type="SMR" id="P11172"/>
<dbReference type="BioGRID" id="113218">
    <property type="interactions" value="144"/>
</dbReference>
<dbReference type="CORUM" id="P11172"/>
<dbReference type="DIP" id="DIP-29595N"/>
<dbReference type="FunCoup" id="P11172">
    <property type="interactions" value="4207"/>
</dbReference>
<dbReference type="IntAct" id="P11172">
    <property type="interactions" value="53"/>
</dbReference>
<dbReference type="MINT" id="P11172"/>
<dbReference type="STRING" id="9606.ENSP00000232607"/>
<dbReference type="BindingDB" id="P11172"/>
<dbReference type="ChEMBL" id="CHEMBL5216"/>
<dbReference type="DrugBank" id="DB02890">
    <property type="generic name" value="6-hydroxyuridine-5'-phosphate"/>
</dbReference>
<dbReference type="DrugBank" id="DB00544">
    <property type="generic name" value="Fluorouracil"/>
</dbReference>
<dbReference type="DrugCentral" id="P11172"/>
<dbReference type="GlyGen" id="P11172">
    <property type="glycosylation" value="1 site, 1 O-linked glycan (1 site)"/>
</dbReference>
<dbReference type="iPTMnet" id="P11172"/>
<dbReference type="MetOSite" id="P11172"/>
<dbReference type="PhosphoSitePlus" id="P11172"/>
<dbReference type="SwissPalm" id="P11172"/>
<dbReference type="BioMuta" id="UMPS"/>
<dbReference type="jPOST" id="P11172"/>
<dbReference type="MassIVE" id="P11172"/>
<dbReference type="PaxDb" id="9606-ENSP00000232607"/>
<dbReference type="PeptideAtlas" id="P11172"/>
<dbReference type="ProteomicsDB" id="52713">
    <molecule id="P11172-1"/>
</dbReference>
<dbReference type="ProteomicsDB" id="52714">
    <molecule id="P11172-2"/>
</dbReference>
<dbReference type="ProteomicsDB" id="5937"/>
<dbReference type="ProteomicsDB" id="5938"/>
<dbReference type="Pumba" id="P11172"/>
<dbReference type="Antibodypedia" id="32990">
    <property type="antibodies" value="224 antibodies from 32 providers"/>
</dbReference>
<dbReference type="DNASU" id="7372"/>
<dbReference type="Ensembl" id="ENST00000232607.7">
    <molecule id="P11172-1"/>
    <property type="protein sequence ID" value="ENSP00000232607.2"/>
    <property type="gene ID" value="ENSG00000114491.14"/>
</dbReference>
<dbReference type="GeneID" id="7372"/>
<dbReference type="KEGG" id="hsa:7372"/>
<dbReference type="MANE-Select" id="ENST00000232607.7">
    <property type="protein sequence ID" value="ENSP00000232607.2"/>
    <property type="RefSeq nucleotide sequence ID" value="NM_000373.4"/>
    <property type="RefSeq protein sequence ID" value="NP_000364.1"/>
</dbReference>
<dbReference type="UCSC" id="uc003ehl.5">
    <molecule id="P11172-1"/>
    <property type="organism name" value="human"/>
</dbReference>
<dbReference type="AGR" id="HGNC:12563"/>
<dbReference type="CTD" id="7372"/>
<dbReference type="DisGeNET" id="7372"/>
<dbReference type="GeneCards" id="UMPS"/>
<dbReference type="HGNC" id="HGNC:12563">
    <property type="gene designation" value="UMPS"/>
</dbReference>
<dbReference type="HPA" id="ENSG00000114491">
    <property type="expression patterns" value="Low tissue specificity"/>
</dbReference>
<dbReference type="MalaCards" id="UMPS"/>
<dbReference type="MIM" id="258900">
    <property type="type" value="phenotype"/>
</dbReference>
<dbReference type="MIM" id="613891">
    <property type="type" value="gene"/>
</dbReference>
<dbReference type="neXtProt" id="NX_P11172"/>
<dbReference type="OpenTargets" id="ENSG00000114491"/>
<dbReference type="Orphanet" id="30">
    <property type="disease" value="Hereditary orotic aciduria"/>
</dbReference>
<dbReference type="PharmGKB" id="PA363"/>
<dbReference type="VEuPathDB" id="HostDB:ENSG00000114491"/>
<dbReference type="eggNOG" id="KOG1377">
    <property type="taxonomic scope" value="Eukaryota"/>
</dbReference>
<dbReference type="GeneTree" id="ENSGT00390000001856"/>
<dbReference type="HOGENOM" id="CLU_049275_1_0_1"/>
<dbReference type="InParanoid" id="P11172"/>
<dbReference type="OMA" id="SAKHVCG"/>
<dbReference type="OrthoDB" id="10263753at2759"/>
<dbReference type="PAN-GO" id="P11172">
    <property type="GO annotations" value="4 GO annotations based on evolutionary models"/>
</dbReference>
<dbReference type="PhylomeDB" id="P11172"/>
<dbReference type="TreeFam" id="TF314694"/>
<dbReference type="BRENDA" id="4.1.1.23">
    <property type="organism ID" value="2681"/>
</dbReference>
<dbReference type="PathwayCommons" id="P11172"/>
<dbReference type="Reactome" id="R-HSA-500753">
    <property type="pathway name" value="Pyrimidine biosynthesis"/>
</dbReference>
<dbReference type="SignaLink" id="P11172"/>
<dbReference type="SIGNOR" id="P11172"/>
<dbReference type="UniPathway" id="UPA00070">
    <property type="reaction ID" value="UER00119"/>
</dbReference>
<dbReference type="UniPathway" id="UPA00070">
    <property type="reaction ID" value="UER00120"/>
</dbReference>
<dbReference type="BioGRID-ORCS" id="7372">
    <property type="hits" value="274 hits in 1169 CRISPR screens"/>
</dbReference>
<dbReference type="ChiTaRS" id="UMPS">
    <property type="organism name" value="human"/>
</dbReference>
<dbReference type="EvolutionaryTrace" id="P11172"/>
<dbReference type="GeneWiki" id="Uridine_monophosphate_synthetase"/>
<dbReference type="GenomeRNAi" id="7372"/>
<dbReference type="Pharos" id="P11172">
    <property type="development level" value="Tclin"/>
</dbReference>
<dbReference type="PRO" id="PR:P11172"/>
<dbReference type="Proteomes" id="UP000005640">
    <property type="component" value="Chromosome 3"/>
</dbReference>
<dbReference type="RNAct" id="P11172">
    <property type="molecule type" value="protein"/>
</dbReference>
<dbReference type="Bgee" id="ENSG00000114491">
    <property type="expression patterns" value="Expressed in adrenal tissue and 192 other cell types or tissues"/>
</dbReference>
<dbReference type="ExpressionAtlas" id="P11172">
    <property type="expression patterns" value="baseline and differential"/>
</dbReference>
<dbReference type="GO" id="GO:0005737">
    <property type="term" value="C:cytoplasm"/>
    <property type="evidence" value="ECO:0000314"/>
    <property type="project" value="UniProtKB"/>
</dbReference>
<dbReference type="GO" id="GO:0005829">
    <property type="term" value="C:cytosol"/>
    <property type="evidence" value="ECO:0000304"/>
    <property type="project" value="Reactome"/>
</dbReference>
<dbReference type="GO" id="GO:0005634">
    <property type="term" value="C:nucleus"/>
    <property type="evidence" value="ECO:0000314"/>
    <property type="project" value="UniProtKB"/>
</dbReference>
<dbReference type="GO" id="GO:0042802">
    <property type="term" value="F:identical protein binding"/>
    <property type="evidence" value="ECO:0000353"/>
    <property type="project" value="IntAct"/>
</dbReference>
<dbReference type="GO" id="GO:0004588">
    <property type="term" value="F:orotate phosphoribosyltransferase activity"/>
    <property type="evidence" value="ECO:0000314"/>
    <property type="project" value="UniProtKB"/>
</dbReference>
<dbReference type="GO" id="GO:0004590">
    <property type="term" value="F:orotidine-5'-phosphate decarboxylase activity"/>
    <property type="evidence" value="ECO:0000314"/>
    <property type="project" value="UniProtKB"/>
</dbReference>
<dbReference type="GO" id="GO:0006207">
    <property type="term" value="P:'de novo' pyrimidine nucleobase biosynthetic process"/>
    <property type="evidence" value="ECO:0007669"/>
    <property type="project" value="InterPro"/>
</dbReference>
<dbReference type="GO" id="GO:0044205">
    <property type="term" value="P:'de novo' UMP biosynthetic process"/>
    <property type="evidence" value="ECO:0007669"/>
    <property type="project" value="UniProtKB-UniPathway"/>
</dbReference>
<dbReference type="GO" id="GO:0019856">
    <property type="term" value="P:pyrimidine nucleobase biosynthetic process"/>
    <property type="evidence" value="ECO:0000318"/>
    <property type="project" value="GO_Central"/>
</dbReference>
<dbReference type="GO" id="GO:0006225">
    <property type="term" value="P:UDP biosynthetic process"/>
    <property type="evidence" value="ECO:0007669"/>
    <property type="project" value="Ensembl"/>
</dbReference>
<dbReference type="GO" id="GO:0006222">
    <property type="term" value="P:UMP biosynthetic process"/>
    <property type="evidence" value="ECO:0000314"/>
    <property type="project" value="UniProtKB"/>
</dbReference>
<dbReference type="CDD" id="cd04725">
    <property type="entry name" value="OMP_decarboxylase_like"/>
    <property type="match status" value="1"/>
</dbReference>
<dbReference type="CDD" id="cd06223">
    <property type="entry name" value="PRTases_typeI"/>
    <property type="match status" value="1"/>
</dbReference>
<dbReference type="FunFam" id="3.20.20.70:FF:000092">
    <property type="entry name" value="Uridine monophosphate synthetase"/>
    <property type="match status" value="1"/>
</dbReference>
<dbReference type="FunFam" id="3.40.50.2020:FF:000025">
    <property type="entry name" value="Uridine monophosphate synthetase"/>
    <property type="match status" value="1"/>
</dbReference>
<dbReference type="Gene3D" id="3.40.50.2020">
    <property type="match status" value="1"/>
</dbReference>
<dbReference type="Gene3D" id="3.20.20.70">
    <property type="entry name" value="Aldolase class I"/>
    <property type="match status" value="1"/>
</dbReference>
<dbReference type="HAMAP" id="MF_01208">
    <property type="entry name" value="PyrE"/>
    <property type="match status" value="1"/>
</dbReference>
<dbReference type="InterPro" id="IPR013785">
    <property type="entry name" value="Aldolase_TIM"/>
</dbReference>
<dbReference type="InterPro" id="IPR014732">
    <property type="entry name" value="OMPdecase"/>
</dbReference>
<dbReference type="InterPro" id="IPR018089">
    <property type="entry name" value="OMPdecase_AS"/>
</dbReference>
<dbReference type="InterPro" id="IPR001754">
    <property type="entry name" value="OMPdeCOase_dom"/>
</dbReference>
<dbReference type="InterPro" id="IPR023031">
    <property type="entry name" value="OPRT"/>
</dbReference>
<dbReference type="InterPro" id="IPR004467">
    <property type="entry name" value="Or_phspho_trans_dom"/>
</dbReference>
<dbReference type="InterPro" id="IPR000836">
    <property type="entry name" value="PRibTrfase_dom"/>
</dbReference>
<dbReference type="InterPro" id="IPR029057">
    <property type="entry name" value="PRTase-like"/>
</dbReference>
<dbReference type="InterPro" id="IPR011060">
    <property type="entry name" value="RibuloseP-bd_barrel"/>
</dbReference>
<dbReference type="NCBIfam" id="TIGR00336">
    <property type="entry name" value="pyrE"/>
    <property type="match status" value="1"/>
</dbReference>
<dbReference type="NCBIfam" id="TIGR01740">
    <property type="entry name" value="pyrF"/>
    <property type="match status" value="1"/>
</dbReference>
<dbReference type="PANTHER" id="PTHR19278">
    <property type="entry name" value="OROTATE PHOSPHORIBOSYLTRANSFERASE"/>
    <property type="match status" value="1"/>
</dbReference>
<dbReference type="PANTHER" id="PTHR19278:SF9">
    <property type="entry name" value="URIDINE 5'-MONOPHOSPHATE SYNTHASE"/>
    <property type="match status" value="1"/>
</dbReference>
<dbReference type="Pfam" id="PF00215">
    <property type="entry name" value="OMPdecase"/>
    <property type="match status" value="1"/>
</dbReference>
<dbReference type="Pfam" id="PF00156">
    <property type="entry name" value="Pribosyltran"/>
    <property type="match status" value="1"/>
</dbReference>
<dbReference type="SMART" id="SM00934">
    <property type="entry name" value="OMPdecase"/>
    <property type="match status" value="1"/>
</dbReference>
<dbReference type="SUPFAM" id="SSF53271">
    <property type="entry name" value="PRTase-like"/>
    <property type="match status" value="1"/>
</dbReference>
<dbReference type="SUPFAM" id="SSF51366">
    <property type="entry name" value="Ribulose-phoshate binding barrel"/>
    <property type="match status" value="1"/>
</dbReference>
<dbReference type="PROSITE" id="PS00156">
    <property type="entry name" value="OMPDECASE"/>
    <property type="match status" value="1"/>
</dbReference>
<dbReference type="PROSITE" id="PS00103">
    <property type="entry name" value="PUR_PYR_PR_TRANSFER"/>
    <property type="match status" value="1"/>
</dbReference>
<keyword id="KW-0002">3D-structure</keyword>
<keyword id="KW-0007">Acetylation</keyword>
<keyword id="KW-0025">Alternative splicing</keyword>
<keyword id="KW-0210">Decarboxylase</keyword>
<keyword id="KW-0225">Disease variant</keyword>
<keyword id="KW-0328">Glycosyltransferase</keyword>
<keyword id="KW-0456">Lyase</keyword>
<keyword id="KW-0511">Multifunctional enzyme</keyword>
<keyword id="KW-0597">Phosphoprotein</keyword>
<keyword id="KW-1267">Proteomics identification</keyword>
<keyword id="KW-0665">Pyrimidine biosynthesis</keyword>
<keyword id="KW-1185">Reference proteome</keyword>
<keyword id="KW-0808">Transferase</keyword>
<sequence length="480" mass="52222">MAVARAALGPLVTGLYDVQAFKFGDFVLKSGLSSPIYIDLRGIVSRPRLLSQVADILFQTAQNAGISFDTVCGVPYTALPLATVICSTNQIPMLIRRKETKDYGTKRLVEGTINPGETCLIIEDVVTSGSSVLETVEVLQKEGLKVTDAIVLLDREQGGKDKLQAHGIRLHSVCTLSKMLEILEQQKKVDAETVGRVKRFIQENVFVAANHNGSPLSIKEAPKELSFGARAELPRIHPVASKLLRLMQKKETNLCLSADVSLARELLQLADALGPSICMLKTHVDILNDFTLDVMKELITLAKCHEFLIFEDRKFADIGNTVKKQYEGGIFKIASWADLVNAHVVPGSGVVKGLQEVGLPLHRGCLLIAEMSSTGSLATGDYTRAAVRMAEEHSEFVVGFISGSRVSMKPEFLHLTPGVQLEAGGDNLGQQYNSPQEVIGKRGSDIIIVGRGIISAADRLEAAEMYRKAAWEAYLSRLGV</sequence>
<proteinExistence type="evidence at protein level"/>
<evidence type="ECO:0000269" key="1">
    <source>
    </source>
</evidence>
<evidence type="ECO:0000269" key="2">
    <source>
    </source>
</evidence>
<evidence type="ECO:0000269" key="3">
    <source ref="8"/>
</evidence>
<evidence type="ECO:0000303" key="4">
    <source>
    </source>
</evidence>
<evidence type="ECO:0000303" key="5">
    <source>
    </source>
</evidence>
<evidence type="ECO:0000303" key="6">
    <source>
    </source>
</evidence>
<evidence type="ECO:0000303" key="7">
    <source ref="4"/>
</evidence>
<evidence type="ECO:0000305" key="8"/>
<evidence type="ECO:0000312" key="9">
    <source>
        <dbReference type="HGNC" id="HGNC:12563"/>
    </source>
</evidence>
<evidence type="ECO:0007744" key="10">
    <source>
        <dbReference type="PDB" id="2QCC"/>
    </source>
</evidence>
<evidence type="ECO:0007744" key="11">
    <source>
        <dbReference type="PDB" id="2QCD"/>
    </source>
</evidence>
<evidence type="ECO:0007744" key="12">
    <source>
        <dbReference type="PDB" id="2QCE"/>
    </source>
</evidence>
<evidence type="ECO:0007744" key="13">
    <source>
        <dbReference type="PDB" id="2QCF"/>
    </source>
</evidence>
<evidence type="ECO:0007744" key="14">
    <source>
        <dbReference type="PDB" id="2QCG"/>
    </source>
</evidence>
<evidence type="ECO:0007744" key="15">
    <source>
        <dbReference type="PDB" id="2QCH"/>
    </source>
</evidence>
<evidence type="ECO:0007744" key="16">
    <source>
        <dbReference type="PDB" id="2QCL"/>
    </source>
</evidence>
<evidence type="ECO:0007744" key="17">
    <source>
        <dbReference type="PDB" id="2QCM"/>
    </source>
</evidence>
<evidence type="ECO:0007744" key="18">
    <source>
        <dbReference type="PDB" id="2QCN"/>
    </source>
</evidence>
<evidence type="ECO:0007744" key="19">
    <source>
    </source>
</evidence>
<evidence type="ECO:0007744" key="20">
    <source>
    </source>
</evidence>
<evidence type="ECO:0007744" key="21">
    <source>
    </source>
</evidence>
<evidence type="ECO:0007744" key="22">
    <source>
    </source>
</evidence>
<evidence type="ECO:0007829" key="23">
    <source>
        <dbReference type="PDB" id="2WNS"/>
    </source>
</evidence>
<evidence type="ECO:0007829" key="24">
    <source>
        <dbReference type="PDB" id="6ZWZ"/>
    </source>
</evidence>
<evidence type="ECO:0007829" key="25">
    <source>
        <dbReference type="PDB" id="7OQM"/>
    </source>
</evidence>
<evidence type="ECO:0007829" key="26">
    <source>
        <dbReference type="PDB" id="7OUZ"/>
    </source>
</evidence>
<organism>
    <name type="scientific">Homo sapiens</name>
    <name type="common">Human</name>
    <dbReference type="NCBI Taxonomy" id="9606"/>
    <lineage>
        <taxon>Eukaryota</taxon>
        <taxon>Metazoa</taxon>
        <taxon>Chordata</taxon>
        <taxon>Craniata</taxon>
        <taxon>Vertebrata</taxon>
        <taxon>Euteleostomi</taxon>
        <taxon>Mammalia</taxon>
        <taxon>Eutheria</taxon>
        <taxon>Euarchontoglires</taxon>
        <taxon>Primates</taxon>
        <taxon>Haplorrhini</taxon>
        <taxon>Catarrhini</taxon>
        <taxon>Hominidae</taxon>
        <taxon>Homo</taxon>
    </lineage>
</organism>
<reference key="1">
    <citation type="journal article" date="1988" name="Proc. Natl. Acad. Sci. U.S.A.">
        <title>Molecular cloning and nucleotide sequence for the complete coding region of human UMP synthase.</title>
        <authorList>
            <person name="Suttle D.P."/>
            <person name="Bugg B.Y."/>
            <person name="Winkler J.K."/>
            <person name="Kanalas J.J."/>
        </authorList>
    </citation>
    <scope>NUCLEOTIDE SEQUENCE [MRNA] (ISOFORM 1)</scope>
</reference>
<reference key="2">
    <citation type="journal article" date="1989" name="Adv. Exp. Med. Biol.">
        <title>Molecular cloning of human UMP synthase.</title>
        <authorList>
            <person name="Suchi M."/>
            <person name="Harada N."/>
            <person name="Tsuboi T."/>
            <person name="Asai K."/>
            <person name="Okajima K."/>
            <person name="Wada Y."/>
            <person name="Takagi Y."/>
        </authorList>
    </citation>
    <scope>NUCLEOTIDE SEQUENCE [GENOMIC DNA]</scope>
</reference>
<reference key="3">
    <citation type="journal article" date="1997" name="Am. J. Hum. Genet.">
        <title>Molecular cloning of the human UMP synthase gene and characterization of point mutations in two hereditary orotic aciduria families.</title>
        <authorList>
            <person name="Suchi M."/>
            <person name="Mizuno H."/>
            <person name="Kawai Y."/>
            <person name="Tsuboi T."/>
            <person name="Sumi S."/>
            <person name="Okajima K."/>
            <person name="Hodgson M.E."/>
            <person name="Ogawa H."/>
            <person name="Wada Y."/>
        </authorList>
    </citation>
    <scope>NUCLEOTIDE SEQUENCE [GENOMIC DNA]</scope>
    <scope>VARIANTS ORAC1 GLY-96; GLY-109 AND ARG-429</scope>
    <scope>VARIANT ALA-213</scope>
    <scope>CATALYTIC ACTIVITY</scope>
    <scope>FUNCTION</scope>
    <scope>CHARACTERIZATION OF VARIANTS ORAC1 GLY-96; GLY-109 AND ARG-429</scope>
    <source>
        <tissue>Leukocyte</tissue>
    </source>
</reference>
<reference key="4">
    <citation type="submission" date="2008-07" db="EMBL/GenBank/DDBJ databases">
        <title>Genomic analysis of UMPS expression and sequence reveals novel isoforms and sequence polymorphisms associated with 5-FU resistance.</title>
        <authorList>
            <person name="Griffith M."/>
            <person name="Pugh T.J."/>
            <person name="Tang M.J."/>
            <person name="Asano J.K."/>
            <person name="Ally A."/>
            <person name="Chan S.Y."/>
            <person name="Taylor G."/>
            <person name="Morin G.B."/>
            <person name="Tai I.T."/>
            <person name="Marra M.A."/>
        </authorList>
    </citation>
    <scope>NUCLEOTIDE SEQUENCE [MRNA] (ISOFORMS 3 AND 4)</scope>
</reference>
<reference key="5">
    <citation type="submission" date="2001-05" db="EMBL/GenBank/DDBJ databases">
        <title>Identification of immuno-peptidmics that are recognized by tumor-reactive CTL generated from TIL of colon cancer patients.</title>
        <authorList>
            <person name="Shichijo S."/>
            <person name="Itoh K."/>
        </authorList>
    </citation>
    <scope>NUCLEOTIDE SEQUENCE [LARGE SCALE MRNA] (ISOFORM 1)</scope>
    <source>
        <tissue>Colon adenocarcinoma</tissue>
    </source>
</reference>
<reference key="6">
    <citation type="submission" date="2004-06" db="EMBL/GenBank/DDBJ databases">
        <title>Cloning of human full open reading frames in Gateway(TM) system entry vector (pDONR201).</title>
        <authorList>
            <person name="Ebert L."/>
            <person name="Schick M."/>
            <person name="Neubert P."/>
            <person name="Schatten R."/>
            <person name="Henze S."/>
            <person name="Korn B."/>
        </authorList>
    </citation>
    <scope>NUCLEOTIDE SEQUENCE [LARGE SCALE MRNA] (ISOFORM 1)</scope>
</reference>
<reference key="7">
    <citation type="journal article" date="2007" name="BMC Genomics">
        <title>The full-ORF clone resource of the German cDNA consortium.</title>
        <authorList>
            <person name="Bechtel S."/>
            <person name="Rosenfelder H."/>
            <person name="Duda A."/>
            <person name="Schmidt C.P."/>
            <person name="Ernst U."/>
            <person name="Wellenreuther R."/>
            <person name="Mehrle A."/>
            <person name="Schuster C."/>
            <person name="Bahr A."/>
            <person name="Bloecker H."/>
            <person name="Heubner D."/>
            <person name="Hoerlein A."/>
            <person name="Michel G."/>
            <person name="Wedler H."/>
            <person name="Koehrer K."/>
            <person name="Ottenwaelder B."/>
            <person name="Poustka A."/>
            <person name="Wiemann S."/>
            <person name="Schupp I."/>
        </authorList>
    </citation>
    <scope>NUCLEOTIDE SEQUENCE [LARGE SCALE MRNA] (ISOFORM 2)</scope>
    <source>
        <tissue>Fetal brain</tissue>
    </source>
</reference>
<reference key="8">
    <citation type="submission" date="2004-07" db="EMBL/GenBank/DDBJ databases">
        <authorList>
            <consortium name="NIEHS SNPs program"/>
        </authorList>
    </citation>
    <scope>NUCLEOTIDE SEQUENCE [GENOMIC DNA]</scope>
    <scope>VARIANTS GLY-30; ALA-213 AND VAL-446</scope>
</reference>
<reference key="9">
    <citation type="journal article" date="2006" name="Nature">
        <title>The DNA sequence, annotation and analysis of human chromosome 3.</title>
        <authorList>
            <person name="Muzny D.M."/>
            <person name="Scherer S.E."/>
            <person name="Kaul R."/>
            <person name="Wang J."/>
            <person name="Yu J."/>
            <person name="Sudbrak R."/>
            <person name="Buhay C.J."/>
            <person name="Chen R."/>
            <person name="Cree A."/>
            <person name="Ding Y."/>
            <person name="Dugan-Rocha S."/>
            <person name="Gill R."/>
            <person name="Gunaratne P."/>
            <person name="Harris R.A."/>
            <person name="Hawes A.C."/>
            <person name="Hernandez J."/>
            <person name="Hodgson A.V."/>
            <person name="Hume J."/>
            <person name="Jackson A."/>
            <person name="Khan Z.M."/>
            <person name="Kovar-Smith C."/>
            <person name="Lewis L.R."/>
            <person name="Lozado R.J."/>
            <person name="Metzker M.L."/>
            <person name="Milosavljevic A."/>
            <person name="Miner G.R."/>
            <person name="Morgan M.B."/>
            <person name="Nazareth L.V."/>
            <person name="Scott G."/>
            <person name="Sodergren E."/>
            <person name="Song X.-Z."/>
            <person name="Steffen D."/>
            <person name="Wei S."/>
            <person name="Wheeler D.A."/>
            <person name="Wright M.W."/>
            <person name="Worley K.C."/>
            <person name="Yuan Y."/>
            <person name="Zhang Z."/>
            <person name="Adams C.Q."/>
            <person name="Ansari-Lari M.A."/>
            <person name="Ayele M."/>
            <person name="Brown M.J."/>
            <person name="Chen G."/>
            <person name="Chen Z."/>
            <person name="Clendenning J."/>
            <person name="Clerc-Blankenburg K.P."/>
            <person name="Chen R."/>
            <person name="Chen Z."/>
            <person name="Davis C."/>
            <person name="Delgado O."/>
            <person name="Dinh H.H."/>
            <person name="Dong W."/>
            <person name="Draper H."/>
            <person name="Ernst S."/>
            <person name="Fu G."/>
            <person name="Gonzalez-Garay M.L."/>
            <person name="Garcia D.K."/>
            <person name="Gillett W."/>
            <person name="Gu J."/>
            <person name="Hao B."/>
            <person name="Haugen E."/>
            <person name="Havlak P."/>
            <person name="He X."/>
            <person name="Hennig S."/>
            <person name="Hu S."/>
            <person name="Huang W."/>
            <person name="Jackson L.R."/>
            <person name="Jacob L.S."/>
            <person name="Kelly S.H."/>
            <person name="Kube M."/>
            <person name="Levy R."/>
            <person name="Li Z."/>
            <person name="Liu B."/>
            <person name="Liu J."/>
            <person name="Liu W."/>
            <person name="Lu J."/>
            <person name="Maheshwari M."/>
            <person name="Nguyen B.-V."/>
            <person name="Okwuonu G.O."/>
            <person name="Palmeiri A."/>
            <person name="Pasternak S."/>
            <person name="Perez L.M."/>
            <person name="Phelps K.A."/>
            <person name="Plopper F.J."/>
            <person name="Qiang B."/>
            <person name="Raymond C."/>
            <person name="Rodriguez R."/>
            <person name="Saenphimmachak C."/>
            <person name="Santibanez J."/>
            <person name="Shen H."/>
            <person name="Shen Y."/>
            <person name="Subramanian S."/>
            <person name="Tabor P.E."/>
            <person name="Verduzco D."/>
            <person name="Waldron L."/>
            <person name="Wang J."/>
            <person name="Wang J."/>
            <person name="Wang Q."/>
            <person name="Williams G.A."/>
            <person name="Wong G.K.-S."/>
            <person name="Yao Z."/>
            <person name="Zhang J."/>
            <person name="Zhang X."/>
            <person name="Zhao G."/>
            <person name="Zhou J."/>
            <person name="Zhou Y."/>
            <person name="Nelson D."/>
            <person name="Lehrach H."/>
            <person name="Reinhardt R."/>
            <person name="Naylor S.L."/>
            <person name="Yang H."/>
            <person name="Olson M."/>
            <person name="Weinstock G."/>
            <person name="Gibbs R.A."/>
        </authorList>
    </citation>
    <scope>NUCLEOTIDE SEQUENCE [LARGE SCALE GENOMIC DNA]</scope>
</reference>
<reference key="10">
    <citation type="journal article" date="2004" name="Genome Res.">
        <title>The status, quality, and expansion of the NIH full-length cDNA project: the Mammalian Gene Collection (MGC).</title>
        <authorList>
            <consortium name="The MGC Project Team"/>
        </authorList>
    </citation>
    <scope>NUCLEOTIDE SEQUENCE [LARGE SCALE MRNA] (ISOFORM 1)</scope>
    <source>
        <tissue>Muscle</tissue>
    </source>
</reference>
<reference key="11">
    <citation type="journal article" date="1988" name="Nagoya Med. J.">
        <title>Molecular genetic studies on hereditary orotic aciduria: I. Purification of human orotidine 5'-monophosphate decarboxylase and cloning of its cDNA.</title>
        <authorList>
            <person name="Suchi M."/>
        </authorList>
    </citation>
    <scope>NUCLEOTIDE SEQUENCE [MRNA] OF 13-480 (ISOFORM 1)</scope>
</reference>
<reference key="12">
    <citation type="journal article" date="2008" name="Proc. Natl. Acad. Sci. U.S.A.">
        <title>A quantitative atlas of mitotic phosphorylation.</title>
        <authorList>
            <person name="Dephoure N."/>
            <person name="Zhou C."/>
            <person name="Villen J."/>
            <person name="Beausoleil S.A."/>
            <person name="Bakalarski C.E."/>
            <person name="Elledge S.J."/>
            <person name="Gygi S.P."/>
        </authorList>
    </citation>
    <scope>PHOSPHORYLATION [LARGE SCALE ANALYSIS] AT SER-214</scope>
    <scope>IDENTIFICATION BY MASS SPECTROMETRY [LARGE SCALE ANALYSIS]</scope>
    <source>
        <tissue>Cervix carcinoma</tissue>
    </source>
</reference>
<reference key="13">
    <citation type="journal article" date="2009" name="Anal. Chem.">
        <title>Lys-N and trypsin cover complementary parts of the phosphoproteome in a refined SCX-based approach.</title>
        <authorList>
            <person name="Gauci S."/>
            <person name="Helbig A.O."/>
            <person name="Slijper M."/>
            <person name="Krijgsveld J."/>
            <person name="Heck A.J."/>
            <person name="Mohammed S."/>
        </authorList>
    </citation>
    <scope>ACETYLATION [LARGE SCALE ANALYSIS] AT ALA-2</scope>
    <scope>CLEAVAGE OF INITIATOR METHIONINE [LARGE SCALE ANALYSIS]</scope>
    <scope>IDENTIFICATION BY MASS SPECTROMETRY [LARGE SCALE ANALYSIS]</scope>
</reference>
<reference key="14">
    <citation type="journal article" date="2010" name="Sci. Signal.">
        <title>Quantitative phosphoproteomics reveals widespread full phosphorylation site occupancy during mitosis.</title>
        <authorList>
            <person name="Olsen J.V."/>
            <person name="Vermeulen M."/>
            <person name="Santamaria A."/>
            <person name="Kumar C."/>
            <person name="Miller M.L."/>
            <person name="Jensen L.J."/>
            <person name="Gnad F."/>
            <person name="Cox J."/>
            <person name="Jensen T.S."/>
            <person name="Nigg E.A."/>
            <person name="Brunak S."/>
            <person name="Mann M."/>
        </authorList>
    </citation>
    <scope>PHOSPHORYLATION [LARGE SCALE ANALYSIS] AT SER-214</scope>
    <scope>IDENTIFICATION BY MASS SPECTROMETRY [LARGE SCALE ANALYSIS]</scope>
    <source>
        <tissue>Cervix carcinoma</tissue>
    </source>
</reference>
<reference key="15">
    <citation type="journal article" date="2011" name="BMC Syst. Biol.">
        <title>Initial characterization of the human central proteome.</title>
        <authorList>
            <person name="Burkard T.R."/>
            <person name="Planyavsky M."/>
            <person name="Kaupe I."/>
            <person name="Breitwieser F.P."/>
            <person name="Buerckstuemmer T."/>
            <person name="Bennett K.L."/>
            <person name="Superti-Furga G."/>
            <person name="Colinge J."/>
        </authorList>
    </citation>
    <scope>IDENTIFICATION BY MASS SPECTROMETRY [LARGE SCALE ANALYSIS]</scope>
</reference>
<reference key="16">
    <citation type="journal article" date="2011" name="Sci. Signal.">
        <title>System-wide temporal characterization of the proteome and phosphoproteome of human embryonic stem cell differentiation.</title>
        <authorList>
            <person name="Rigbolt K.T."/>
            <person name="Prokhorova T.A."/>
            <person name="Akimov V."/>
            <person name="Henningsen J."/>
            <person name="Johansen P.T."/>
            <person name="Kratchmarova I."/>
            <person name="Kassem M."/>
            <person name="Mann M."/>
            <person name="Olsen J.V."/>
            <person name="Blagoev B."/>
        </authorList>
    </citation>
    <scope>IDENTIFICATION BY MASS SPECTROMETRY [LARGE SCALE ANALYSIS]</scope>
</reference>
<reference key="17">
    <citation type="journal article" date="2013" name="J. Proteome Res.">
        <title>Toward a comprehensive characterization of a human cancer cell phosphoproteome.</title>
        <authorList>
            <person name="Zhou H."/>
            <person name="Di Palma S."/>
            <person name="Preisinger C."/>
            <person name="Peng M."/>
            <person name="Polat A.N."/>
            <person name="Heck A.J."/>
            <person name="Mohammed S."/>
        </authorList>
    </citation>
    <scope>PHOSPHORYLATION [LARGE SCALE ANALYSIS] AT TYR-37 AND SER-214</scope>
    <scope>IDENTIFICATION BY MASS SPECTROMETRY [LARGE SCALE ANALYSIS]</scope>
    <source>
        <tissue>Erythroleukemia</tissue>
    </source>
</reference>
<reference key="18">
    <citation type="journal article" date="2014" name="J. Proteomics">
        <title>An enzyme assisted RP-RPLC approach for in-depth analysis of human liver phosphoproteome.</title>
        <authorList>
            <person name="Bian Y."/>
            <person name="Song C."/>
            <person name="Cheng K."/>
            <person name="Dong M."/>
            <person name="Wang F."/>
            <person name="Huang J."/>
            <person name="Sun D."/>
            <person name="Wang L."/>
            <person name="Ye M."/>
            <person name="Zou H."/>
        </authorList>
    </citation>
    <scope>IDENTIFICATION BY MASS SPECTROMETRY [LARGE SCALE ANALYSIS]</scope>
    <source>
        <tissue>Liver</tissue>
    </source>
</reference>
<reference evidence="10 11 12 13 14 15 16 17 18" key="19">
    <citation type="journal article" date="2008" name="Structure">
        <title>Structures of the human orotidine-5'-monophosphate decarboxylase support a covalent mechanism and provide a framework for drug design.</title>
        <authorList>
            <person name="Wittmann J.G."/>
            <person name="Heinrich D."/>
            <person name="Gasow K."/>
            <person name="Frey A."/>
            <person name="Diederichsen U."/>
            <person name="Rudolph M.G."/>
        </authorList>
    </citation>
    <scope>X-RAY CRYSTALLOGRAPHY (1.22 ANGSTROMS) OF 224-480 IN COMPLEX WITH SUBSTRATE</scope>
    <scope>SUBUNIT</scope>
    <scope>ACTIVE SITE</scope>
    <scope>MUTAGENESIS OF ASP-312</scope>
    <scope>FUNCTION</scope>
    <scope>CATALYTIC ACTIVITY</scope>
    <scope>BIOPHYSICOCHEMICAL PROPERTIES</scope>
</reference>